<keyword id="KW-1185">Reference proteome</keyword>
<keyword id="KW-0687">Ribonucleoprotein</keyword>
<keyword id="KW-0689">Ribosomal protein</keyword>
<keyword id="KW-0694">RNA-binding</keyword>
<keyword id="KW-0699">rRNA-binding</keyword>
<keyword id="KW-0820">tRNA-binding</keyword>
<reference key="1">
    <citation type="journal article" date="2005" name="Nucleic Acids Res.">
        <title>Genome dynamics and diversity of Shigella species, the etiologic agents of bacillary dysentery.</title>
        <authorList>
            <person name="Yang F."/>
            <person name="Yang J."/>
            <person name="Zhang X."/>
            <person name="Chen L."/>
            <person name="Jiang Y."/>
            <person name="Yan Y."/>
            <person name="Tang X."/>
            <person name="Wang J."/>
            <person name="Xiong Z."/>
            <person name="Dong J."/>
            <person name="Xue Y."/>
            <person name="Zhu Y."/>
            <person name="Xu X."/>
            <person name="Sun L."/>
            <person name="Chen S."/>
            <person name="Nie H."/>
            <person name="Peng J."/>
            <person name="Xu J."/>
            <person name="Wang Y."/>
            <person name="Yuan Z."/>
            <person name="Wen Y."/>
            <person name="Yao Z."/>
            <person name="Shen Y."/>
            <person name="Qiang B."/>
            <person name="Hou Y."/>
            <person name="Yu J."/>
            <person name="Jin Q."/>
        </authorList>
    </citation>
    <scope>NUCLEOTIDE SEQUENCE [LARGE SCALE GENOMIC DNA]</scope>
    <source>
        <strain>Ss046</strain>
    </source>
</reference>
<feature type="chain" id="PRO_0000226528" description="Small ribosomal subunit protein uS7">
    <location>
        <begin position="1"/>
        <end position="156"/>
    </location>
</feature>
<accession>Q3YWT1</accession>
<evidence type="ECO:0000255" key="1">
    <source>
        <dbReference type="HAMAP-Rule" id="MF_00480"/>
    </source>
</evidence>
<evidence type="ECO:0000305" key="2"/>
<protein>
    <recommendedName>
        <fullName evidence="1">Small ribosomal subunit protein uS7</fullName>
    </recommendedName>
    <alternativeName>
        <fullName evidence="2">30S ribosomal protein S7</fullName>
    </alternativeName>
</protein>
<comment type="function">
    <text evidence="1">One of the primary rRNA binding proteins, it binds directly to 16S rRNA where it nucleates assembly of the head domain of the 30S subunit. Is located at the subunit interface close to the decoding center, probably blocks exit of the E-site tRNA.</text>
</comment>
<comment type="subunit">
    <text evidence="1">Part of the 30S ribosomal subunit. Contacts proteins S9 and S11.</text>
</comment>
<comment type="similarity">
    <text evidence="1">Belongs to the universal ribosomal protein uS7 family.</text>
</comment>
<sequence length="156" mass="17604">MPRRRVIGQRKILPDPKFGSELLAKFVNILMVDGKKSTAESIVYSALETLAQRSGKSELEAFEVALENVRPTVEVKSRRVGGSTYQVPVEVRPVRRNALAMRWIVEAARKRGDKSMALRLANELSDAAENKGTAVKKREDVHRMAEANKAFAHYRW</sequence>
<organism>
    <name type="scientific">Shigella sonnei (strain Ss046)</name>
    <dbReference type="NCBI Taxonomy" id="300269"/>
    <lineage>
        <taxon>Bacteria</taxon>
        <taxon>Pseudomonadati</taxon>
        <taxon>Pseudomonadota</taxon>
        <taxon>Gammaproteobacteria</taxon>
        <taxon>Enterobacterales</taxon>
        <taxon>Enterobacteriaceae</taxon>
        <taxon>Shigella</taxon>
    </lineage>
</organism>
<gene>
    <name evidence="1" type="primary">rpsG</name>
    <name type="ordered locus">SSON_3471</name>
</gene>
<proteinExistence type="inferred from homology"/>
<dbReference type="EMBL" id="CP000038">
    <property type="protein sequence ID" value="AAZ90031.1"/>
    <property type="molecule type" value="Genomic_DNA"/>
</dbReference>
<dbReference type="RefSeq" id="WP_001138043.1">
    <property type="nucleotide sequence ID" value="NC_007384.1"/>
</dbReference>
<dbReference type="SMR" id="Q3YWT1"/>
<dbReference type="GeneID" id="93778657"/>
<dbReference type="KEGG" id="ssn:SSON_3471"/>
<dbReference type="HOGENOM" id="CLU_072226_1_1_6"/>
<dbReference type="Proteomes" id="UP000002529">
    <property type="component" value="Chromosome"/>
</dbReference>
<dbReference type="GO" id="GO:0015935">
    <property type="term" value="C:small ribosomal subunit"/>
    <property type="evidence" value="ECO:0007669"/>
    <property type="project" value="InterPro"/>
</dbReference>
<dbReference type="GO" id="GO:0019843">
    <property type="term" value="F:rRNA binding"/>
    <property type="evidence" value="ECO:0007669"/>
    <property type="project" value="UniProtKB-UniRule"/>
</dbReference>
<dbReference type="GO" id="GO:0003735">
    <property type="term" value="F:structural constituent of ribosome"/>
    <property type="evidence" value="ECO:0007669"/>
    <property type="project" value="InterPro"/>
</dbReference>
<dbReference type="GO" id="GO:0000049">
    <property type="term" value="F:tRNA binding"/>
    <property type="evidence" value="ECO:0007669"/>
    <property type="project" value="UniProtKB-UniRule"/>
</dbReference>
<dbReference type="GO" id="GO:0006412">
    <property type="term" value="P:translation"/>
    <property type="evidence" value="ECO:0007669"/>
    <property type="project" value="UniProtKB-UniRule"/>
</dbReference>
<dbReference type="CDD" id="cd14869">
    <property type="entry name" value="uS7_Bacteria"/>
    <property type="match status" value="1"/>
</dbReference>
<dbReference type="FunFam" id="1.10.455.10:FF:000001">
    <property type="entry name" value="30S ribosomal protein S7"/>
    <property type="match status" value="1"/>
</dbReference>
<dbReference type="Gene3D" id="1.10.455.10">
    <property type="entry name" value="Ribosomal protein S7 domain"/>
    <property type="match status" value="1"/>
</dbReference>
<dbReference type="HAMAP" id="MF_00480_B">
    <property type="entry name" value="Ribosomal_uS7_B"/>
    <property type="match status" value="1"/>
</dbReference>
<dbReference type="InterPro" id="IPR000235">
    <property type="entry name" value="Ribosomal_uS7"/>
</dbReference>
<dbReference type="InterPro" id="IPR005717">
    <property type="entry name" value="Ribosomal_uS7_bac/org-type"/>
</dbReference>
<dbReference type="InterPro" id="IPR020606">
    <property type="entry name" value="Ribosomal_uS7_CS"/>
</dbReference>
<dbReference type="InterPro" id="IPR023798">
    <property type="entry name" value="Ribosomal_uS7_dom"/>
</dbReference>
<dbReference type="InterPro" id="IPR036823">
    <property type="entry name" value="Ribosomal_uS7_dom_sf"/>
</dbReference>
<dbReference type="NCBIfam" id="TIGR01029">
    <property type="entry name" value="rpsG_bact"/>
    <property type="match status" value="1"/>
</dbReference>
<dbReference type="PANTHER" id="PTHR11205">
    <property type="entry name" value="RIBOSOMAL PROTEIN S7"/>
    <property type="match status" value="1"/>
</dbReference>
<dbReference type="Pfam" id="PF00177">
    <property type="entry name" value="Ribosomal_S7"/>
    <property type="match status" value="1"/>
</dbReference>
<dbReference type="PIRSF" id="PIRSF002122">
    <property type="entry name" value="RPS7p_RPS7a_RPS5e_RPS7o"/>
    <property type="match status" value="1"/>
</dbReference>
<dbReference type="SUPFAM" id="SSF47973">
    <property type="entry name" value="Ribosomal protein S7"/>
    <property type="match status" value="1"/>
</dbReference>
<dbReference type="PROSITE" id="PS00052">
    <property type="entry name" value="RIBOSOMAL_S7"/>
    <property type="match status" value="1"/>
</dbReference>
<name>RS7_SHISS</name>